<keyword id="KW-0025">Alternative splicing</keyword>
<keyword id="KW-0131">Cell cycle</keyword>
<keyword id="KW-0132">Cell division</keyword>
<keyword id="KW-0195">Cyclin</keyword>
<keyword id="KW-1185">Reference proteome</keyword>
<reference key="1">
    <citation type="journal article" date="2000" name="Nature">
        <title>Sequence and analysis of chromosome 1 of the plant Arabidopsis thaliana.</title>
        <authorList>
            <person name="Theologis A."/>
            <person name="Ecker J.R."/>
            <person name="Palm C.J."/>
            <person name="Federspiel N.A."/>
            <person name="Kaul S."/>
            <person name="White O."/>
            <person name="Alonso J."/>
            <person name="Altafi H."/>
            <person name="Araujo R."/>
            <person name="Bowman C.L."/>
            <person name="Brooks S.Y."/>
            <person name="Buehler E."/>
            <person name="Chan A."/>
            <person name="Chao Q."/>
            <person name="Chen H."/>
            <person name="Cheuk R.F."/>
            <person name="Chin C.W."/>
            <person name="Chung M.K."/>
            <person name="Conn L."/>
            <person name="Conway A.B."/>
            <person name="Conway A.R."/>
            <person name="Creasy T.H."/>
            <person name="Dewar K."/>
            <person name="Dunn P."/>
            <person name="Etgu P."/>
            <person name="Feldblyum T.V."/>
            <person name="Feng J.-D."/>
            <person name="Fong B."/>
            <person name="Fujii C.Y."/>
            <person name="Gill J.E."/>
            <person name="Goldsmith A.D."/>
            <person name="Haas B."/>
            <person name="Hansen N.F."/>
            <person name="Hughes B."/>
            <person name="Huizar L."/>
            <person name="Hunter J.L."/>
            <person name="Jenkins J."/>
            <person name="Johnson-Hopson C."/>
            <person name="Khan S."/>
            <person name="Khaykin E."/>
            <person name="Kim C.J."/>
            <person name="Koo H.L."/>
            <person name="Kremenetskaia I."/>
            <person name="Kurtz D.B."/>
            <person name="Kwan A."/>
            <person name="Lam B."/>
            <person name="Langin-Hooper S."/>
            <person name="Lee A."/>
            <person name="Lee J.M."/>
            <person name="Lenz C.A."/>
            <person name="Li J.H."/>
            <person name="Li Y.-P."/>
            <person name="Lin X."/>
            <person name="Liu S.X."/>
            <person name="Liu Z.A."/>
            <person name="Luros J.S."/>
            <person name="Maiti R."/>
            <person name="Marziali A."/>
            <person name="Militscher J."/>
            <person name="Miranda M."/>
            <person name="Nguyen M."/>
            <person name="Nierman W.C."/>
            <person name="Osborne B.I."/>
            <person name="Pai G."/>
            <person name="Peterson J."/>
            <person name="Pham P.K."/>
            <person name="Rizzo M."/>
            <person name="Rooney T."/>
            <person name="Rowley D."/>
            <person name="Sakano H."/>
            <person name="Salzberg S.L."/>
            <person name="Schwartz J.R."/>
            <person name="Shinn P."/>
            <person name="Southwick A.M."/>
            <person name="Sun H."/>
            <person name="Tallon L.J."/>
            <person name="Tambunga G."/>
            <person name="Toriumi M.J."/>
            <person name="Town C.D."/>
            <person name="Utterback T."/>
            <person name="Van Aken S."/>
            <person name="Vaysberg M."/>
            <person name="Vysotskaia V.S."/>
            <person name="Walker M."/>
            <person name="Wu D."/>
            <person name="Yu G."/>
            <person name="Fraser C.M."/>
            <person name="Venter J.C."/>
            <person name="Davis R.W."/>
        </authorList>
    </citation>
    <scope>NUCLEOTIDE SEQUENCE [LARGE SCALE GENOMIC DNA]</scope>
    <source>
        <strain>cv. Columbia</strain>
    </source>
</reference>
<reference key="2">
    <citation type="journal article" date="2017" name="Plant J.">
        <title>Araport11: a complete reannotation of the Arabidopsis thaliana reference genome.</title>
        <authorList>
            <person name="Cheng C.Y."/>
            <person name="Krishnakumar V."/>
            <person name="Chan A.P."/>
            <person name="Thibaud-Nissen F."/>
            <person name="Schobel S."/>
            <person name="Town C.D."/>
        </authorList>
    </citation>
    <scope>GENOME REANNOTATION</scope>
    <source>
        <strain>cv. Columbia</strain>
    </source>
</reference>
<reference key="3">
    <citation type="submission" date="2006-07" db="EMBL/GenBank/DDBJ databases">
        <title>Large-scale analysis of RIKEN Arabidopsis full-length (RAFL) cDNAs.</title>
        <authorList>
            <person name="Totoki Y."/>
            <person name="Seki M."/>
            <person name="Ishida J."/>
            <person name="Nakajima M."/>
            <person name="Enju A."/>
            <person name="Kamiya A."/>
            <person name="Narusaka M."/>
            <person name="Shin-i T."/>
            <person name="Nakagawa M."/>
            <person name="Sakamoto N."/>
            <person name="Oishi K."/>
            <person name="Kohara Y."/>
            <person name="Kobayashi M."/>
            <person name="Toyoda A."/>
            <person name="Sakaki Y."/>
            <person name="Sakurai T."/>
            <person name="Iida K."/>
            <person name="Akiyama K."/>
            <person name="Satou M."/>
            <person name="Toyoda T."/>
            <person name="Konagaya A."/>
            <person name="Carninci P."/>
            <person name="Kawai J."/>
            <person name="Hayashizaki Y."/>
            <person name="Shinozaki K."/>
        </authorList>
    </citation>
    <scope>NUCLEOTIDE SEQUENCE [LARGE SCALE MRNA] (ISOFORM 1)</scope>
    <source>
        <strain>cv. Columbia</strain>
    </source>
</reference>
<reference key="4">
    <citation type="submission" date="2002-03" db="EMBL/GenBank/DDBJ databases">
        <title>Full-length cDNA from Arabidopsis thaliana.</title>
        <authorList>
            <person name="Brover V.V."/>
            <person name="Troukhan M.E."/>
            <person name="Alexandrov N.A."/>
            <person name="Lu Y.-P."/>
            <person name="Flavell R.B."/>
            <person name="Feldmann K.A."/>
        </authorList>
    </citation>
    <scope>NUCLEOTIDE SEQUENCE [LARGE SCALE MRNA] (ISOFORM 2)</scope>
</reference>
<reference key="5">
    <citation type="journal article" date="2004" name="Plant Physiol.">
        <title>Genome-wide analysis of the cyclin family in Arabidopsis and comparative phylogenetic analysis of plant cyclin-like proteins.</title>
        <authorList>
            <person name="Wang G."/>
            <person name="Kong H."/>
            <person name="Sun Y."/>
            <person name="Zhang X."/>
            <person name="Zhang W."/>
            <person name="Altman N."/>
            <person name="dePamphilis C.W."/>
            <person name="Ma H."/>
        </authorList>
    </citation>
    <scope>GENE FAMILY</scope>
    <scope>NOMENCLATURE</scope>
</reference>
<reference key="6">
    <citation type="journal article" date="2005" name="Cell Cycle">
        <title>Arabidopsis anaphase-promoting complexes: multiple activators and wide range of substrates might keep APC perpetually busy.</title>
        <authorList>
            <person name="Fueloep K."/>
            <person name="Tarayre S."/>
            <person name="Kelemen Z."/>
            <person name="Horvath G."/>
            <person name="Kevei Z."/>
            <person name="Nikovics K."/>
            <person name="Bako L."/>
            <person name="Brown S."/>
            <person name="Kondorosi A."/>
            <person name="Kondorosi E."/>
        </authorList>
    </citation>
    <scope>DEVELOPMENTAL STAGE</scope>
    <scope>INTERACTION WITH FZR1; FZR2 AND FZR3</scope>
</reference>
<sequence>MAENQNCARMTRAAAKRKASSMALDENPVSKKRVVLGELPNMSNVVAVPNQERETLKAKTSVNTSKRQMKKALMIPEASVLIESRSVDPQMCEPFASDICAYLREMEGKPKHRPLPDYIEKVQSDLTPHMRAVLVDWLVEVAEEYKLVSDTLYLTISYVDRFLSVKPINRQKLQLVGVSAMLIASRKYEEIGPPKVEDFCYITDNTFTKQEVVSMEADILLALQFELGSPTIKTFLRRFTRVAQEDFKDSQLQIEFLCCYLSELSMLDYTCVKYLPSLLSASAVFLARFIIRPKQHPWNQMLEEYTKYKAADLQVCVGIIHDLYLSRRGNTLEAVRNKYKQHKYKCVATMPVSPELPLAFFEDITIRGMA</sequence>
<dbReference type="EMBL" id="AC079677">
    <property type="protein sequence ID" value="AAG52644.1"/>
    <property type="molecule type" value="Genomic_DNA"/>
</dbReference>
<dbReference type="EMBL" id="CP002684">
    <property type="protein sequence ID" value="AEE32140.1"/>
    <property type="molecule type" value="Genomic_DNA"/>
</dbReference>
<dbReference type="EMBL" id="CP002684">
    <property type="protein sequence ID" value="AEE32141.1"/>
    <property type="molecule type" value="Genomic_DNA"/>
</dbReference>
<dbReference type="EMBL" id="AK226253">
    <property type="protein sequence ID" value="BAE98414.1"/>
    <property type="molecule type" value="mRNA"/>
</dbReference>
<dbReference type="EMBL" id="AY087628">
    <property type="protein sequence ID" value="AAM65168.1"/>
    <property type="molecule type" value="mRNA"/>
</dbReference>
<dbReference type="PIR" id="A96513">
    <property type="entry name" value="A96513"/>
</dbReference>
<dbReference type="RefSeq" id="NP_175156.1">
    <molecule id="Q3ECW2-2"/>
    <property type="nucleotide sequence ID" value="NM_103617.4"/>
</dbReference>
<dbReference type="RefSeq" id="NP_973983.1">
    <molecule id="Q3ECW2-1"/>
    <property type="nucleotide sequence ID" value="NM_202254.2"/>
</dbReference>
<dbReference type="SMR" id="Q3ECW2"/>
<dbReference type="BioGRID" id="26351">
    <property type="interactions" value="27"/>
</dbReference>
<dbReference type="FunCoup" id="Q3ECW2">
    <property type="interactions" value="3305"/>
</dbReference>
<dbReference type="IntAct" id="Q3ECW2">
    <property type="interactions" value="13"/>
</dbReference>
<dbReference type="STRING" id="3702.Q3ECW2"/>
<dbReference type="PaxDb" id="3702-AT1G47230.2"/>
<dbReference type="ProteomicsDB" id="223888">
    <molecule id="Q3ECW2-1"/>
</dbReference>
<dbReference type="EnsemblPlants" id="AT1G47230.1">
    <molecule id="Q3ECW2-2"/>
    <property type="protein sequence ID" value="AT1G47230.1"/>
    <property type="gene ID" value="AT1G47230"/>
</dbReference>
<dbReference type="EnsemblPlants" id="AT1G47230.2">
    <molecule id="Q3ECW2-1"/>
    <property type="protein sequence ID" value="AT1G47230.2"/>
    <property type="gene ID" value="AT1G47230"/>
</dbReference>
<dbReference type="GeneID" id="841126"/>
<dbReference type="Gramene" id="AT1G47230.1">
    <molecule id="Q3ECW2-2"/>
    <property type="protein sequence ID" value="AT1G47230.1"/>
    <property type="gene ID" value="AT1G47230"/>
</dbReference>
<dbReference type="Gramene" id="AT1G47230.2">
    <molecule id="Q3ECW2-1"/>
    <property type="protein sequence ID" value="AT1G47230.2"/>
    <property type="gene ID" value="AT1G47230"/>
</dbReference>
<dbReference type="KEGG" id="ath:AT1G47230"/>
<dbReference type="Araport" id="AT1G47230"/>
<dbReference type="TAIR" id="AT1G47230">
    <property type="gene designation" value="CYCA3"/>
</dbReference>
<dbReference type="eggNOG" id="KOG0654">
    <property type="taxonomic scope" value="Eukaryota"/>
</dbReference>
<dbReference type="HOGENOM" id="CLU_020695_2_2_1"/>
<dbReference type="InParanoid" id="Q3ECW2"/>
<dbReference type="OMA" id="DQYMTPE"/>
<dbReference type="OrthoDB" id="5590282at2759"/>
<dbReference type="PhylomeDB" id="Q3ECW2"/>
<dbReference type="PRO" id="PR:Q3ECW2"/>
<dbReference type="Proteomes" id="UP000006548">
    <property type="component" value="Chromosome 1"/>
</dbReference>
<dbReference type="ExpressionAtlas" id="Q3ECW2">
    <property type="expression patterns" value="baseline and differential"/>
</dbReference>
<dbReference type="GO" id="GO:0005634">
    <property type="term" value="C:nucleus"/>
    <property type="evidence" value="ECO:0000314"/>
    <property type="project" value="TAIR"/>
</dbReference>
<dbReference type="GO" id="GO:0016538">
    <property type="term" value="F:cyclin-dependent protein serine/threonine kinase regulator activity"/>
    <property type="evidence" value="ECO:0007669"/>
    <property type="project" value="InterPro"/>
</dbReference>
<dbReference type="GO" id="GO:0051301">
    <property type="term" value="P:cell division"/>
    <property type="evidence" value="ECO:0007669"/>
    <property type="project" value="UniProtKB-KW"/>
</dbReference>
<dbReference type="GO" id="GO:0044772">
    <property type="term" value="P:mitotic cell cycle phase transition"/>
    <property type="evidence" value="ECO:0007669"/>
    <property type="project" value="InterPro"/>
</dbReference>
<dbReference type="CDD" id="cd20506">
    <property type="entry name" value="CYCLIN_AtCycA-like_rpt2"/>
    <property type="match status" value="1"/>
</dbReference>
<dbReference type="CDD" id="cd20562">
    <property type="entry name" value="CYCLIN_AtCycA_like_rpt1"/>
    <property type="match status" value="1"/>
</dbReference>
<dbReference type="FunFam" id="1.10.472.10:FF:000013">
    <property type="entry name" value="Cyclin A1"/>
    <property type="match status" value="1"/>
</dbReference>
<dbReference type="FunFam" id="1.10.472.10:FF:000167">
    <property type="entry name" value="Mitotic cyclin 6"/>
    <property type="match status" value="1"/>
</dbReference>
<dbReference type="Gene3D" id="1.10.472.10">
    <property type="entry name" value="Cyclin-like"/>
    <property type="match status" value="2"/>
</dbReference>
<dbReference type="InterPro" id="IPR039361">
    <property type="entry name" value="Cyclin"/>
</dbReference>
<dbReference type="InterPro" id="IPR013763">
    <property type="entry name" value="Cyclin-like_dom"/>
</dbReference>
<dbReference type="InterPro" id="IPR036915">
    <property type="entry name" value="Cyclin-like_sf"/>
</dbReference>
<dbReference type="InterPro" id="IPR046965">
    <property type="entry name" value="Cyclin_A/B-like"/>
</dbReference>
<dbReference type="InterPro" id="IPR004367">
    <property type="entry name" value="Cyclin_C-dom"/>
</dbReference>
<dbReference type="InterPro" id="IPR006671">
    <property type="entry name" value="Cyclin_N"/>
</dbReference>
<dbReference type="InterPro" id="IPR048258">
    <property type="entry name" value="Cyclins_cyclin-box"/>
</dbReference>
<dbReference type="PANTHER" id="PTHR10177">
    <property type="entry name" value="CYCLINS"/>
    <property type="match status" value="1"/>
</dbReference>
<dbReference type="Pfam" id="PF02984">
    <property type="entry name" value="Cyclin_C"/>
    <property type="match status" value="1"/>
</dbReference>
<dbReference type="Pfam" id="PF00134">
    <property type="entry name" value="Cyclin_N"/>
    <property type="match status" value="1"/>
</dbReference>
<dbReference type="PIRSF" id="PIRSF001771">
    <property type="entry name" value="Cyclin_A_B_D_E"/>
    <property type="match status" value="1"/>
</dbReference>
<dbReference type="SMART" id="SM00385">
    <property type="entry name" value="CYCLIN"/>
    <property type="match status" value="2"/>
</dbReference>
<dbReference type="SMART" id="SM01332">
    <property type="entry name" value="Cyclin_C"/>
    <property type="match status" value="1"/>
</dbReference>
<dbReference type="SUPFAM" id="SSF47954">
    <property type="entry name" value="Cyclin-like"/>
    <property type="match status" value="2"/>
</dbReference>
<dbReference type="PROSITE" id="PS00292">
    <property type="entry name" value="CYCLINS"/>
    <property type="match status" value="1"/>
</dbReference>
<accession>Q3ECW2</accession>
<accession>Q9C6B1</accession>
<proteinExistence type="evidence at protein level"/>
<evidence type="ECO:0000269" key="1">
    <source>
    </source>
</evidence>
<evidence type="ECO:0000303" key="2">
    <source ref="4"/>
</evidence>
<evidence type="ECO:0000305" key="3"/>
<feature type="chain" id="PRO_0000287001" description="Cyclin-A3-4">
    <location>
        <begin position="1"/>
        <end position="370"/>
    </location>
</feature>
<feature type="splice variant" id="VSP_025280" description="In isoform 2." evidence="2">
    <location>
        <position position="186"/>
    </location>
</feature>
<gene>
    <name type="primary">CYCA3-4</name>
    <name type="ordered locus">At1g47230</name>
    <name type="ORF">F8G22.5</name>
</gene>
<protein>
    <recommendedName>
        <fullName>Cyclin-A3-4</fullName>
    </recommendedName>
    <alternativeName>
        <fullName>G2/mitotic-specific cyclin-A3-4</fullName>
        <shortName>CycA3;4</shortName>
    </alternativeName>
</protein>
<name>CCA34_ARATH</name>
<organism>
    <name type="scientific">Arabidopsis thaliana</name>
    <name type="common">Mouse-ear cress</name>
    <dbReference type="NCBI Taxonomy" id="3702"/>
    <lineage>
        <taxon>Eukaryota</taxon>
        <taxon>Viridiplantae</taxon>
        <taxon>Streptophyta</taxon>
        <taxon>Embryophyta</taxon>
        <taxon>Tracheophyta</taxon>
        <taxon>Spermatophyta</taxon>
        <taxon>Magnoliopsida</taxon>
        <taxon>eudicotyledons</taxon>
        <taxon>Gunneridae</taxon>
        <taxon>Pentapetalae</taxon>
        <taxon>rosids</taxon>
        <taxon>malvids</taxon>
        <taxon>Brassicales</taxon>
        <taxon>Brassicaceae</taxon>
        <taxon>Camelineae</taxon>
        <taxon>Arabidopsis</taxon>
    </lineage>
</organism>
<comment type="subunit">
    <text evidence="1">Interacts with FZR2/CCS52A1, FZR1/CCS52A2 and FZR3/CCS52B.</text>
</comment>
<comment type="alternative products">
    <event type="alternative splicing"/>
    <isoform>
        <id>Q3ECW2-1</id>
        <name>1</name>
        <sequence type="displayed"/>
    </isoform>
    <isoform>
        <id>Q3ECW2-2</id>
        <name>2</name>
        <sequence type="described" ref="VSP_025280"/>
    </isoform>
</comment>
<comment type="developmental stage">
    <text evidence="1">Highly expressed in the S and G2 phases and reduceed levels in the M phase.</text>
</comment>
<comment type="miscellaneous">
    <molecule>Isoform 2</molecule>
    <text evidence="3">May be due to competing acceptor splice site.</text>
</comment>
<comment type="similarity">
    <text evidence="3">Belongs to the cyclin family. Cyclin AB subfamily.</text>
</comment>